<accession>Q6B942</accession>
<evidence type="ECO:0000250" key="1">
    <source>
        <dbReference type="UniProtKB" id="Q76FB0"/>
    </source>
</evidence>
<evidence type="ECO:0000255" key="2">
    <source>
        <dbReference type="HAMAP-Rule" id="MF_01378"/>
    </source>
</evidence>
<feature type="signal peptide" evidence="2">
    <location>
        <begin position="1"/>
        <end position="27"/>
    </location>
</feature>
<feature type="chain" id="PRO_0000295613" description="Photosystem II extrinsic protein V">
    <location>
        <begin position="28"/>
        <end position="164"/>
    </location>
</feature>
<feature type="binding site" description="covalent" evidence="2">
    <location>
        <position position="64"/>
    </location>
    <ligand>
        <name>heme c</name>
        <dbReference type="ChEBI" id="CHEBI:61717"/>
    </ligand>
</feature>
<feature type="binding site" description="covalent" evidence="2">
    <location>
        <position position="67"/>
    </location>
    <ligand>
        <name>heme c</name>
        <dbReference type="ChEBI" id="CHEBI:61717"/>
    </ligand>
</feature>
<feature type="binding site" description="axial binding residue" evidence="2">
    <location>
        <position position="68"/>
    </location>
    <ligand>
        <name>heme c</name>
        <dbReference type="ChEBI" id="CHEBI:61717"/>
    </ligand>
    <ligandPart>
        <name>Fe</name>
        <dbReference type="ChEBI" id="CHEBI:18248"/>
    </ligandPart>
</feature>
<feature type="binding site" description="axial binding residue" evidence="2">
    <location>
        <position position="131"/>
    </location>
    <ligand>
        <name>heme c</name>
        <dbReference type="ChEBI" id="CHEBI:61717"/>
    </ligand>
    <ligandPart>
        <name>Fe</name>
        <dbReference type="ChEBI" id="CHEBI:18248"/>
    </ligandPart>
</feature>
<geneLocation type="chloroplast"/>
<sequence length="164" mass="18189">MIPNRKIQLSLFAVIIVFETLLNQVYAMELDEATRTVTLEESGKTITLTPEQVKRGKRLFNNSCAQCHNGGITKTNPNIGLDPESLSGATPVRDNIRNLIEYIKDPTSYDGATSIAELHPSIKSAEIFPKMRNLTDEDLFAIAGHILIQPKIAAEKWGGGKIYY</sequence>
<dbReference type="EMBL" id="AY673996">
    <property type="protein sequence ID" value="AAT79593.1"/>
    <property type="molecule type" value="Genomic_DNA"/>
</dbReference>
<dbReference type="RefSeq" id="YP_063518.1">
    <property type="nucleotide sequence ID" value="NC_006137.1"/>
</dbReference>
<dbReference type="SMR" id="Q6B942"/>
<dbReference type="GeneID" id="2944155"/>
<dbReference type="GO" id="GO:0009535">
    <property type="term" value="C:chloroplast thylakoid membrane"/>
    <property type="evidence" value="ECO:0007669"/>
    <property type="project" value="UniProtKB-SubCell"/>
</dbReference>
<dbReference type="GO" id="GO:0009523">
    <property type="term" value="C:photosystem II"/>
    <property type="evidence" value="ECO:0007669"/>
    <property type="project" value="UniProtKB-KW"/>
</dbReference>
<dbReference type="GO" id="GO:0009055">
    <property type="term" value="F:electron transfer activity"/>
    <property type="evidence" value="ECO:0007669"/>
    <property type="project" value="InterPro"/>
</dbReference>
<dbReference type="GO" id="GO:0020037">
    <property type="term" value="F:heme binding"/>
    <property type="evidence" value="ECO:0007669"/>
    <property type="project" value="InterPro"/>
</dbReference>
<dbReference type="GO" id="GO:0005506">
    <property type="term" value="F:iron ion binding"/>
    <property type="evidence" value="ECO:0007669"/>
    <property type="project" value="InterPro"/>
</dbReference>
<dbReference type="GO" id="GO:0019684">
    <property type="term" value="P:photosynthesis, light reaction"/>
    <property type="evidence" value="ECO:0007669"/>
    <property type="project" value="UniProtKB-UniRule"/>
</dbReference>
<dbReference type="GO" id="GO:0022904">
    <property type="term" value="P:respiratory electron transport chain"/>
    <property type="evidence" value="ECO:0007669"/>
    <property type="project" value="InterPro"/>
</dbReference>
<dbReference type="Gene3D" id="1.10.760.10">
    <property type="entry name" value="Cytochrome c-like domain"/>
    <property type="match status" value="1"/>
</dbReference>
<dbReference type="HAMAP" id="MF_01378">
    <property type="entry name" value="PSII_Cyt550"/>
    <property type="match status" value="1"/>
</dbReference>
<dbReference type="InterPro" id="IPR009056">
    <property type="entry name" value="Cyt_c-like_dom"/>
</dbReference>
<dbReference type="InterPro" id="IPR036909">
    <property type="entry name" value="Cyt_c-like_dom_sf"/>
</dbReference>
<dbReference type="InterPro" id="IPR029490">
    <property type="entry name" value="Cytochrom_C550"/>
</dbReference>
<dbReference type="InterPro" id="IPR017851">
    <property type="entry name" value="PsbV_cyt_c550"/>
</dbReference>
<dbReference type="InterPro" id="IPR016003">
    <property type="entry name" value="PsbV_cyt_c550-like"/>
</dbReference>
<dbReference type="NCBIfam" id="TIGR03045">
    <property type="entry name" value="PS_II_C550"/>
    <property type="match status" value="1"/>
</dbReference>
<dbReference type="Pfam" id="PF14495">
    <property type="entry name" value="Cytochrom_C550"/>
    <property type="match status" value="1"/>
</dbReference>
<dbReference type="PIRSF" id="PIRSF005890">
    <property type="entry name" value="Phot_II_cyt_c550"/>
    <property type="match status" value="1"/>
</dbReference>
<dbReference type="SUPFAM" id="SSF46626">
    <property type="entry name" value="Cytochrome c"/>
    <property type="match status" value="1"/>
</dbReference>
<dbReference type="PROSITE" id="PS51007">
    <property type="entry name" value="CYTC"/>
    <property type="match status" value="1"/>
</dbReference>
<gene>
    <name evidence="2" type="primary">psbV</name>
    <name type="ordered locus">Grc000011</name>
</gene>
<comment type="function">
    <text evidence="2">One of the extrinsic, lumenal subunits of photosystem II (PSII). PSII is a light-driven water plastoquinone oxidoreductase, using light energy to abstract electrons from H(2)O, generating a proton gradient subsequently used for ATP formation. The extrinsic proteins stabilize the structure of photosystem II oxygen-evolving complex (OEC), the ion environment of oxygen evolution and protect the OEC against heat-induced inactivation.</text>
</comment>
<comment type="cofactor">
    <cofactor evidence="2">
        <name>heme c</name>
        <dbReference type="ChEBI" id="CHEBI:61717"/>
    </cofactor>
    <text evidence="2">Binds 1 heme c group covalently per subunit.</text>
</comment>
<comment type="subunit">
    <text evidence="1">PSII is composed of 1 copy each of membrane proteins PsbA, PsbB, PsbC, PsbD, PsbE, PsbF, PsbH, PsbI, PsbJ, PsbK, PsbL, PsbM, PsbT, PsbY, PsbZ, Psb30/Ycf12, at least 3 peripheral proteins of the oxygen-evolving complex and a large number of cofactors. It forms dimeric complexes. The extrinsic subunits in red algae are PsbO (OEC33), PsbQ', cytochrome c-550 and PsbU.</text>
</comment>
<comment type="subcellular location">
    <subcellularLocation>
        <location evidence="2">Plastid</location>
        <location evidence="2">Chloroplast thylakoid membrane</location>
        <topology evidence="2">Peripheral membrane protein</topology>
        <orientation evidence="2">Lumenal side</orientation>
    </subcellularLocation>
    <text evidence="2">Associated with photosystem II at the lumenal side of the thylakoid membrane.</text>
</comment>
<comment type="similarity">
    <text evidence="2">Belongs to the cytochrome c family. PsbV subfamily.</text>
</comment>
<reference key="1">
    <citation type="journal article" date="2004" name="J. Mol. Evol.">
        <title>Comparative analysis of the complete plastid genome sequence of the red alga Gracilaria tenuistipitata var. liui provides insights into the evolution of rhodoplasts and their relationship to other plastids.</title>
        <authorList>
            <person name="Hagopian J.C."/>
            <person name="Reis M."/>
            <person name="Kitajima J.P."/>
            <person name="Bhattacharya D."/>
            <person name="de Oliveira M.C."/>
        </authorList>
    </citation>
    <scope>NUCLEOTIDE SEQUENCE [LARGE SCALE GENOMIC DNA]</scope>
</reference>
<organism>
    <name type="scientific">Gracilaria tenuistipitata var. liui</name>
    <name type="common">Red alga</name>
    <dbReference type="NCBI Taxonomy" id="285951"/>
    <lineage>
        <taxon>Eukaryota</taxon>
        <taxon>Rhodophyta</taxon>
        <taxon>Florideophyceae</taxon>
        <taxon>Rhodymeniophycidae</taxon>
        <taxon>Gracilariales</taxon>
        <taxon>Gracilariaceae</taxon>
        <taxon>Gracilaria</taxon>
        <taxon>Gracilaria tenuistipitata</taxon>
    </lineage>
</organism>
<proteinExistence type="inferred from homology"/>
<keyword id="KW-0150">Chloroplast</keyword>
<keyword id="KW-0249">Electron transport</keyword>
<keyword id="KW-0349">Heme</keyword>
<keyword id="KW-0408">Iron</keyword>
<keyword id="KW-0472">Membrane</keyword>
<keyword id="KW-0479">Metal-binding</keyword>
<keyword id="KW-0602">Photosynthesis</keyword>
<keyword id="KW-0604">Photosystem II</keyword>
<keyword id="KW-0934">Plastid</keyword>
<keyword id="KW-0732">Signal</keyword>
<keyword id="KW-0793">Thylakoid</keyword>
<keyword id="KW-0813">Transport</keyword>
<name>CY550_GRATL</name>
<protein>
    <recommendedName>
        <fullName evidence="2">Photosystem II extrinsic protein V</fullName>
        <shortName evidence="2">PsbV</shortName>
    </recommendedName>
    <alternativeName>
        <fullName evidence="2">Cytochrome c-550</fullName>
    </alternativeName>
    <alternativeName>
        <fullName evidence="2">Cytochrome c550</fullName>
    </alternativeName>
</protein>